<reference key="1">
    <citation type="journal article" date="2007" name="Plant Cell">
        <title>Dothideomycete-plant interactions illuminated by genome sequencing and EST analysis of the wheat pathogen Stagonospora nodorum.</title>
        <authorList>
            <person name="Hane J.K."/>
            <person name="Lowe R.G.T."/>
            <person name="Solomon P.S."/>
            <person name="Tan K.-C."/>
            <person name="Schoch C.L."/>
            <person name="Spatafora J.W."/>
            <person name="Crous P.W."/>
            <person name="Kodira C.D."/>
            <person name="Birren B.W."/>
            <person name="Galagan J.E."/>
            <person name="Torriani S.F.F."/>
            <person name="McDonald B.A."/>
            <person name="Oliver R.P."/>
        </authorList>
    </citation>
    <scope>NUCLEOTIDE SEQUENCE [LARGE SCALE GENOMIC DNA]</scope>
    <source>
        <strain>SN15 / ATCC MYA-4574 / FGSC 10173</strain>
    </source>
</reference>
<evidence type="ECO:0000250" key="1"/>
<evidence type="ECO:0000250" key="2">
    <source>
        <dbReference type="UniProtKB" id="P32485"/>
    </source>
</evidence>
<evidence type="ECO:0000250" key="3">
    <source>
        <dbReference type="UniProtKB" id="Q16539"/>
    </source>
</evidence>
<evidence type="ECO:0000250" key="4">
    <source>
        <dbReference type="UniProtKB" id="Q4WSF6"/>
    </source>
</evidence>
<evidence type="ECO:0000255" key="5">
    <source>
        <dbReference type="PROSITE-ProRule" id="PRU00159"/>
    </source>
</evidence>
<evidence type="ECO:0000255" key="6">
    <source>
        <dbReference type="PROSITE-ProRule" id="PRU10027"/>
    </source>
</evidence>
<evidence type="ECO:0000305" key="7"/>
<keyword id="KW-0010">Activator</keyword>
<keyword id="KW-0067">ATP-binding</keyword>
<keyword id="KW-0963">Cytoplasm</keyword>
<keyword id="KW-0418">Kinase</keyword>
<keyword id="KW-0460">Magnesium</keyword>
<keyword id="KW-0479">Metal-binding</keyword>
<keyword id="KW-0547">Nucleotide-binding</keyword>
<keyword id="KW-0539">Nucleus</keyword>
<keyword id="KW-0597">Phosphoprotein</keyword>
<keyword id="KW-0723">Serine/threonine-protein kinase</keyword>
<keyword id="KW-0804">Transcription</keyword>
<keyword id="KW-0805">Transcription regulation</keyword>
<keyword id="KW-0808">Transferase</keyword>
<dbReference type="EC" id="2.7.11.24" evidence="2"/>
<dbReference type="EMBL" id="CH445350">
    <property type="protein sequence ID" value="EAT79180.2"/>
    <property type="status" value="ALT_SEQ"/>
    <property type="molecule type" value="Genomic_DNA"/>
</dbReference>
<dbReference type="RefSeq" id="XP_001803505.1">
    <property type="nucleotide sequence ID" value="XM_001803453.1"/>
</dbReference>
<dbReference type="SMR" id="Q0U4L8"/>
<dbReference type="FunCoup" id="Q0U4L8">
    <property type="interactions" value="543"/>
</dbReference>
<dbReference type="STRING" id="321614.Q0U4L8"/>
<dbReference type="GeneID" id="5980422"/>
<dbReference type="KEGG" id="pno:SNOG_13296"/>
<dbReference type="VEuPathDB" id="FungiDB:JI435_132960"/>
<dbReference type="eggNOG" id="KOG0660">
    <property type="taxonomic scope" value="Eukaryota"/>
</dbReference>
<dbReference type="InParanoid" id="Q0U4L8"/>
<dbReference type="OrthoDB" id="192887at2759"/>
<dbReference type="PHI-base" id="PHI:7568"/>
<dbReference type="Proteomes" id="UP000001055">
    <property type="component" value="Unassembled WGS sequence"/>
</dbReference>
<dbReference type="GO" id="GO:0005737">
    <property type="term" value="C:cytoplasm"/>
    <property type="evidence" value="ECO:0000318"/>
    <property type="project" value="GO_Central"/>
</dbReference>
<dbReference type="GO" id="GO:0005634">
    <property type="term" value="C:nucleus"/>
    <property type="evidence" value="ECO:0000318"/>
    <property type="project" value="GO_Central"/>
</dbReference>
<dbReference type="GO" id="GO:0005524">
    <property type="term" value="F:ATP binding"/>
    <property type="evidence" value="ECO:0007669"/>
    <property type="project" value="UniProtKB-KW"/>
</dbReference>
<dbReference type="GO" id="GO:0004707">
    <property type="term" value="F:MAP kinase activity"/>
    <property type="evidence" value="ECO:0007669"/>
    <property type="project" value="UniProtKB-EC"/>
</dbReference>
<dbReference type="GO" id="GO:0046872">
    <property type="term" value="F:metal ion binding"/>
    <property type="evidence" value="ECO:0007669"/>
    <property type="project" value="UniProtKB-KW"/>
</dbReference>
<dbReference type="GO" id="GO:0106310">
    <property type="term" value="F:protein serine kinase activity"/>
    <property type="evidence" value="ECO:0007669"/>
    <property type="project" value="RHEA"/>
</dbReference>
<dbReference type="GO" id="GO:0004674">
    <property type="term" value="F:protein serine/threonine kinase activity"/>
    <property type="evidence" value="ECO:0000318"/>
    <property type="project" value="GO_Central"/>
</dbReference>
<dbReference type="GO" id="GO:0034599">
    <property type="term" value="P:cellular response to oxidative stress"/>
    <property type="evidence" value="ECO:0000318"/>
    <property type="project" value="GO_Central"/>
</dbReference>
<dbReference type="GO" id="GO:0007231">
    <property type="term" value="P:osmosensory signaling pathway"/>
    <property type="evidence" value="ECO:0000318"/>
    <property type="project" value="GO_Central"/>
</dbReference>
<dbReference type="GO" id="GO:0051403">
    <property type="term" value="P:stress-activated MAPK cascade"/>
    <property type="evidence" value="ECO:0000318"/>
    <property type="project" value="GO_Central"/>
</dbReference>
<dbReference type="CDD" id="cd07856">
    <property type="entry name" value="STKc_Sty1_Hog1"/>
    <property type="match status" value="1"/>
</dbReference>
<dbReference type="FunFam" id="1.10.510.10:FF:000049">
    <property type="entry name" value="Mitogen-activated protein kinase"/>
    <property type="match status" value="1"/>
</dbReference>
<dbReference type="FunFam" id="3.30.200.20:FF:000050">
    <property type="entry name" value="Mitogen-activated protein kinase"/>
    <property type="match status" value="1"/>
</dbReference>
<dbReference type="Gene3D" id="3.30.200.20">
    <property type="entry name" value="Phosphorylase Kinase, domain 1"/>
    <property type="match status" value="1"/>
</dbReference>
<dbReference type="Gene3D" id="1.10.510.10">
    <property type="entry name" value="Transferase(Phosphotransferase) domain 1"/>
    <property type="match status" value="1"/>
</dbReference>
<dbReference type="InterPro" id="IPR011009">
    <property type="entry name" value="Kinase-like_dom_sf"/>
</dbReference>
<dbReference type="InterPro" id="IPR050117">
    <property type="entry name" value="MAP_kinase"/>
</dbReference>
<dbReference type="InterPro" id="IPR003527">
    <property type="entry name" value="MAP_kinase_CS"/>
</dbReference>
<dbReference type="InterPro" id="IPR008352">
    <property type="entry name" value="MAPK_p38-like"/>
</dbReference>
<dbReference type="InterPro" id="IPR038783">
    <property type="entry name" value="MAPK_Sty1/Hog1"/>
</dbReference>
<dbReference type="InterPro" id="IPR000719">
    <property type="entry name" value="Prot_kinase_dom"/>
</dbReference>
<dbReference type="InterPro" id="IPR017441">
    <property type="entry name" value="Protein_kinase_ATP_BS"/>
</dbReference>
<dbReference type="InterPro" id="IPR008271">
    <property type="entry name" value="Ser/Thr_kinase_AS"/>
</dbReference>
<dbReference type="PANTHER" id="PTHR24055">
    <property type="entry name" value="MITOGEN-ACTIVATED PROTEIN KINASE"/>
    <property type="match status" value="1"/>
</dbReference>
<dbReference type="Pfam" id="PF00069">
    <property type="entry name" value="Pkinase"/>
    <property type="match status" value="1"/>
</dbReference>
<dbReference type="PRINTS" id="PR01773">
    <property type="entry name" value="P38MAPKINASE"/>
</dbReference>
<dbReference type="SMART" id="SM00220">
    <property type="entry name" value="S_TKc"/>
    <property type="match status" value="1"/>
</dbReference>
<dbReference type="SUPFAM" id="SSF56112">
    <property type="entry name" value="Protein kinase-like (PK-like)"/>
    <property type="match status" value="1"/>
</dbReference>
<dbReference type="PROSITE" id="PS01351">
    <property type="entry name" value="MAPK"/>
    <property type="match status" value="1"/>
</dbReference>
<dbReference type="PROSITE" id="PS00107">
    <property type="entry name" value="PROTEIN_KINASE_ATP"/>
    <property type="match status" value="1"/>
</dbReference>
<dbReference type="PROSITE" id="PS50011">
    <property type="entry name" value="PROTEIN_KINASE_DOM"/>
    <property type="match status" value="1"/>
</dbReference>
<dbReference type="PROSITE" id="PS00108">
    <property type="entry name" value="PROTEIN_KINASE_ST"/>
    <property type="match status" value="1"/>
</dbReference>
<comment type="function">
    <text evidence="4">Proline-directed serine/threonine-protein kinase involved in a signal transduction pathway that is activated by changes in the osmolarity of the extracellular environment. Controls osmotic regulation of transcription of target genes.</text>
</comment>
<comment type="catalytic activity">
    <reaction evidence="2">
        <text>L-seryl-[protein] + ATP = O-phospho-L-seryl-[protein] + ADP + H(+)</text>
        <dbReference type="Rhea" id="RHEA:17989"/>
        <dbReference type="Rhea" id="RHEA-COMP:9863"/>
        <dbReference type="Rhea" id="RHEA-COMP:11604"/>
        <dbReference type="ChEBI" id="CHEBI:15378"/>
        <dbReference type="ChEBI" id="CHEBI:29999"/>
        <dbReference type="ChEBI" id="CHEBI:30616"/>
        <dbReference type="ChEBI" id="CHEBI:83421"/>
        <dbReference type="ChEBI" id="CHEBI:456216"/>
        <dbReference type="EC" id="2.7.11.24"/>
    </reaction>
    <physiologicalReaction direction="left-to-right" evidence="2">
        <dbReference type="Rhea" id="RHEA:17990"/>
    </physiologicalReaction>
</comment>
<comment type="catalytic activity">
    <reaction evidence="2">
        <text>L-threonyl-[protein] + ATP = O-phospho-L-threonyl-[protein] + ADP + H(+)</text>
        <dbReference type="Rhea" id="RHEA:46608"/>
        <dbReference type="Rhea" id="RHEA-COMP:11060"/>
        <dbReference type="Rhea" id="RHEA-COMP:11605"/>
        <dbReference type="ChEBI" id="CHEBI:15378"/>
        <dbReference type="ChEBI" id="CHEBI:30013"/>
        <dbReference type="ChEBI" id="CHEBI:30616"/>
        <dbReference type="ChEBI" id="CHEBI:61977"/>
        <dbReference type="ChEBI" id="CHEBI:456216"/>
        <dbReference type="EC" id="2.7.11.24"/>
    </reaction>
    <physiologicalReaction direction="left-to-right" evidence="2">
        <dbReference type="Rhea" id="RHEA:46609"/>
    </physiologicalReaction>
</comment>
<comment type="cofactor">
    <cofactor evidence="3">
        <name>Mg(2+)</name>
        <dbReference type="ChEBI" id="CHEBI:18420"/>
    </cofactor>
</comment>
<comment type="activity regulation">
    <text evidence="1">Activated by tyrosine and threonine phosphorylation.</text>
</comment>
<comment type="subcellular location">
    <subcellularLocation>
        <location evidence="1">Cytoplasm</location>
    </subcellularLocation>
    <subcellularLocation>
        <location evidence="1">Nucleus</location>
    </subcellularLocation>
</comment>
<comment type="domain">
    <text>The TXY motif contains the threonine and tyrosine residues whose phosphorylation activates the MAP kinases.</text>
</comment>
<comment type="PTM">
    <text evidence="1">Dually phosphorylated on Thr-171 and Tyr-173, which activates the enzyme.</text>
</comment>
<comment type="similarity">
    <text evidence="5">Belongs to the protein kinase superfamily. Ser/Thr protein kinase family. MAP kinase subfamily. HOG1 sub-subfamily.</text>
</comment>
<comment type="sequence caution" evidence="7">
    <conflict type="erroneous gene model prediction">
        <sequence resource="EMBL-CDS" id="EAT79180"/>
    </conflict>
</comment>
<accession>Q0U4L8</accession>
<name>HOG1_PHANO</name>
<protein>
    <recommendedName>
        <fullName>Mitogen-activated protein kinase HOG1</fullName>
        <shortName>MAP kinase HOG1</shortName>
        <ecNumber evidence="2">2.7.11.24</ecNumber>
    </recommendedName>
</protein>
<feature type="chain" id="PRO_0000289699" description="Mitogen-activated protein kinase HOG1">
    <location>
        <begin position="1"/>
        <end position="355"/>
    </location>
</feature>
<feature type="domain" description="Protein kinase" evidence="5">
    <location>
        <begin position="20"/>
        <end position="299"/>
    </location>
</feature>
<feature type="short sequence motif" description="TXY">
    <location>
        <begin position="171"/>
        <end position="173"/>
    </location>
</feature>
<feature type="active site" description="Proton acceptor" evidence="5 6">
    <location>
        <position position="141"/>
    </location>
</feature>
<feature type="binding site" evidence="5">
    <location>
        <begin position="26"/>
        <end position="34"/>
    </location>
    <ligand>
        <name>ATP</name>
        <dbReference type="ChEBI" id="CHEBI:30616"/>
    </ligand>
</feature>
<feature type="binding site" evidence="5">
    <location>
        <position position="49"/>
    </location>
    <ligand>
        <name>ATP</name>
        <dbReference type="ChEBI" id="CHEBI:30616"/>
    </ligand>
</feature>
<feature type="modified residue" description="Phosphothreonine" evidence="1">
    <location>
        <position position="171"/>
    </location>
</feature>
<feature type="modified residue" description="Phosphotyrosine" evidence="1">
    <location>
        <position position="173"/>
    </location>
</feature>
<organism>
    <name type="scientific">Phaeosphaeria nodorum (strain SN15 / ATCC MYA-4574 / FGSC 10173)</name>
    <name type="common">Glume blotch fungus</name>
    <name type="synonym">Parastagonospora nodorum</name>
    <dbReference type="NCBI Taxonomy" id="321614"/>
    <lineage>
        <taxon>Eukaryota</taxon>
        <taxon>Fungi</taxon>
        <taxon>Dikarya</taxon>
        <taxon>Ascomycota</taxon>
        <taxon>Pezizomycotina</taxon>
        <taxon>Dothideomycetes</taxon>
        <taxon>Pleosporomycetidae</taxon>
        <taxon>Pleosporales</taxon>
        <taxon>Pleosporineae</taxon>
        <taxon>Phaeosphaeriaceae</taxon>
        <taxon>Parastagonospora</taxon>
    </lineage>
</organism>
<proteinExistence type="inferred from homology"/>
<gene>
    <name type="primary">HOG1</name>
    <name type="ORF">SNOG_13296</name>
</gene>
<sequence>MAEFVRAQIFGTTFEITSRYTDLQPVGMGAFGLVCSAKDQLTSQAVAIKKIMKPFSTPVLSKRTYRELKLLKHLRHENIISLSDIFISPLEDIYFVTELLGTDLHRLLTSRPLEKQFIQYFLYQILRGLKYVHSAGVVHRDLKPSNILVNENCDLKICDFGLARIQDPQMTGYVSTRYYRAPEIMLTWQKYDVEVDVWSAGCIFAEMLEGKPLFPGKDHVNQFSIITELLGTPPDDVIHTICSENTLRFVQSLPKRERQPLANKFKNAEPAAVDLLENMLVFDPKKRVRAEQALAHPYLAPYHDPTDEPVAEEKFDWSFNDADLPVDTWKIMMYSEILDYHNVDAAAQEGENGGS</sequence>